<organism>
    <name type="scientific">Helicosporidium sp. subsp. Simulium jonesii</name>
    <name type="common">Green alga</name>
    <dbReference type="NCBI Taxonomy" id="145475"/>
    <lineage>
        <taxon>Eukaryota</taxon>
        <taxon>Viridiplantae</taxon>
        <taxon>Chlorophyta</taxon>
        <taxon>core chlorophytes</taxon>
        <taxon>Trebouxiophyceae</taxon>
        <taxon>Chlorellales</taxon>
        <taxon>Chlorellaceae</taxon>
        <taxon>Helicosporidium</taxon>
    </lineage>
</organism>
<geneLocation type="non-photosynthetic plastid"/>
<keyword id="KW-0934">Plastid</keyword>
<keyword id="KW-0687">Ribonucleoprotein</keyword>
<keyword id="KW-0689">Ribosomal protein</keyword>
<keyword id="KW-0694">RNA-binding</keyword>
<keyword id="KW-0699">rRNA-binding</keyword>
<name>RR12_HELSJ</name>
<gene>
    <name type="primary">rps12</name>
</gene>
<reference key="1">
    <citation type="journal article" date="2004" name="FEMS Microbiol. Lett.">
        <title>The non-photosynthetic, pathogenic green alga Helicosporidium sp. has retained a modified, functional plastid genome.</title>
        <authorList>
            <person name="Tartar A."/>
            <person name="Boucias D.G."/>
        </authorList>
    </citation>
    <scope>NUCLEOTIDE SEQUENCE [GENOMIC DNA]</scope>
</reference>
<reference key="2">
    <citation type="journal article" date="2006" name="BMC Biol.">
        <title>The complete plastid genome sequence of the parasitic green alga, Helicosporidium sp. is highly reduced and structured.</title>
        <authorList>
            <person name="de Koning A.P."/>
            <person name="Keeling P.J."/>
        </authorList>
    </citation>
    <scope>NUCLEOTIDE SEQUENCE [LARGE SCALE GENOMIC DNA]</scope>
</reference>
<sequence length="124" mass="13960">MPTLQQLVRKGRIQKHTKTKTPALNNSPQKRGICIRSYTITPKKPNSALRKVARVRLTSKLEITAYIPGIGHNIQEHSVLLIRGGRVKDLPGVRYQIIRGTRDVSGVTARRQSHSKYGTKKVKN</sequence>
<evidence type="ECO:0000250" key="1"/>
<evidence type="ECO:0000305" key="2"/>
<proteinExistence type="inferred from homology"/>
<comment type="function">
    <text evidence="1">With S4 and S5 plays an important role in translational accuracy. Located at the interface of the 30S and 50S subunits (By similarity).</text>
</comment>
<comment type="subunit">
    <text evidence="1">Part of the 30S ribosomal subunit.</text>
</comment>
<comment type="subcellular location">
    <subcellularLocation>
        <location>Plastid</location>
    </subcellularLocation>
</comment>
<comment type="similarity">
    <text evidence="2">Belongs to the universal ribosomal protein uS12 family.</text>
</comment>
<protein>
    <recommendedName>
        <fullName evidence="2">Small ribosomal subunit protein uS12c</fullName>
    </recommendedName>
    <alternativeName>
        <fullName>Plastid 30S ribosomal protein S12</fullName>
    </alternativeName>
</protein>
<dbReference type="EMBL" id="AY498714">
    <property type="protein sequence ID" value="AAS21038.1"/>
    <property type="molecule type" value="Genomic_DNA"/>
</dbReference>
<dbReference type="EMBL" id="DQ398104">
    <property type="protein sequence ID" value="ABD33987.1"/>
    <property type="molecule type" value="Genomic_DNA"/>
</dbReference>
<dbReference type="RefSeq" id="YP_635939.1">
    <property type="nucleotide sequence ID" value="NC_008100.1"/>
</dbReference>
<dbReference type="SMR" id="Q6RH26"/>
<dbReference type="GeneID" id="4100450"/>
<dbReference type="GO" id="GO:0009536">
    <property type="term" value="C:plastid"/>
    <property type="evidence" value="ECO:0007669"/>
    <property type="project" value="UniProtKB-SubCell"/>
</dbReference>
<dbReference type="GO" id="GO:0015935">
    <property type="term" value="C:small ribosomal subunit"/>
    <property type="evidence" value="ECO:0007669"/>
    <property type="project" value="InterPro"/>
</dbReference>
<dbReference type="GO" id="GO:0019843">
    <property type="term" value="F:rRNA binding"/>
    <property type="evidence" value="ECO:0007669"/>
    <property type="project" value="UniProtKB-KW"/>
</dbReference>
<dbReference type="GO" id="GO:0003735">
    <property type="term" value="F:structural constituent of ribosome"/>
    <property type="evidence" value="ECO:0007669"/>
    <property type="project" value="InterPro"/>
</dbReference>
<dbReference type="GO" id="GO:0006412">
    <property type="term" value="P:translation"/>
    <property type="evidence" value="ECO:0007669"/>
    <property type="project" value="InterPro"/>
</dbReference>
<dbReference type="CDD" id="cd03368">
    <property type="entry name" value="Ribosomal_S12"/>
    <property type="match status" value="1"/>
</dbReference>
<dbReference type="FunFam" id="2.40.50.140:FF:000001">
    <property type="entry name" value="30S ribosomal protein S12"/>
    <property type="match status" value="1"/>
</dbReference>
<dbReference type="Gene3D" id="2.40.50.140">
    <property type="entry name" value="Nucleic acid-binding proteins"/>
    <property type="match status" value="1"/>
</dbReference>
<dbReference type="HAMAP" id="MF_00403_B">
    <property type="entry name" value="Ribosomal_uS12_B"/>
    <property type="match status" value="1"/>
</dbReference>
<dbReference type="InterPro" id="IPR012340">
    <property type="entry name" value="NA-bd_OB-fold"/>
</dbReference>
<dbReference type="InterPro" id="IPR006032">
    <property type="entry name" value="Ribosomal_uS12"/>
</dbReference>
<dbReference type="InterPro" id="IPR005679">
    <property type="entry name" value="Ribosomal_uS12_bac"/>
</dbReference>
<dbReference type="NCBIfam" id="TIGR00981">
    <property type="entry name" value="rpsL_bact"/>
    <property type="match status" value="1"/>
</dbReference>
<dbReference type="PANTHER" id="PTHR11652">
    <property type="entry name" value="30S RIBOSOMAL PROTEIN S12 FAMILY MEMBER"/>
    <property type="match status" value="1"/>
</dbReference>
<dbReference type="Pfam" id="PF00164">
    <property type="entry name" value="Ribosom_S12_S23"/>
    <property type="match status" value="1"/>
</dbReference>
<dbReference type="PIRSF" id="PIRSF002133">
    <property type="entry name" value="Ribosomal_S12/S23"/>
    <property type="match status" value="1"/>
</dbReference>
<dbReference type="PRINTS" id="PR01034">
    <property type="entry name" value="RIBOSOMALS12"/>
</dbReference>
<dbReference type="SUPFAM" id="SSF50249">
    <property type="entry name" value="Nucleic acid-binding proteins"/>
    <property type="match status" value="1"/>
</dbReference>
<dbReference type="PROSITE" id="PS00055">
    <property type="entry name" value="RIBOSOMAL_S12"/>
    <property type="match status" value="1"/>
</dbReference>
<accession>Q6RH26</accession>
<feature type="chain" id="PRO_0000293971" description="Small ribosomal subunit protein uS12c">
    <location>
        <begin position="1"/>
        <end position="124"/>
    </location>
</feature>